<evidence type="ECO:0000255" key="1">
    <source>
        <dbReference type="HAMAP-Rule" id="MF_00528"/>
    </source>
</evidence>
<keyword id="KW-0963">Cytoplasm</keyword>
<keyword id="KW-0378">Hydrolase</keyword>
<keyword id="KW-0546">Nucleotide metabolism</keyword>
<keyword id="KW-1185">Reference proteome</keyword>
<gene>
    <name type="ordered locus">MAP_3401</name>
</gene>
<reference key="1">
    <citation type="journal article" date="2005" name="Proc. Natl. Acad. Sci. U.S.A.">
        <title>The complete genome sequence of Mycobacterium avium subspecies paratuberculosis.</title>
        <authorList>
            <person name="Li L."/>
            <person name="Bannantine J.P."/>
            <person name="Zhang Q."/>
            <person name="Amonsin A."/>
            <person name="May B.J."/>
            <person name="Alt D."/>
            <person name="Banerji N."/>
            <person name="Kanjilal S."/>
            <person name="Kapur V."/>
        </authorList>
    </citation>
    <scope>NUCLEOTIDE SEQUENCE [LARGE SCALE GENOMIC DNA]</scope>
    <source>
        <strain>ATCC BAA-968 / K-10</strain>
    </source>
</reference>
<proteinExistence type="inferred from homology"/>
<organism>
    <name type="scientific">Mycolicibacterium paratuberculosis (strain ATCC BAA-968 / K-10)</name>
    <name type="common">Mycobacterium paratuberculosis</name>
    <dbReference type="NCBI Taxonomy" id="262316"/>
    <lineage>
        <taxon>Bacteria</taxon>
        <taxon>Bacillati</taxon>
        <taxon>Actinomycetota</taxon>
        <taxon>Actinomycetes</taxon>
        <taxon>Mycobacteriales</taxon>
        <taxon>Mycobacteriaceae</taxon>
        <taxon>Mycobacterium</taxon>
        <taxon>Mycobacterium avium complex (MAC)</taxon>
    </lineage>
</organism>
<sequence>MTRLVLASASAGRLKVLRQAGVDPLVVVSGVDEDAVIAALGPDASPSAVVCALATAKADRVAGALQAGVAADCVVVGCDSMLFIDGGLCGKPGSADAALRQWRRIGGRSGGLYTGHCLLRLRDGDITHREVESACTTVHFASPVEADLRAYVAGGEPLAVAGGFTLDGLGGWFVDGIDGDPSNVIGVSLPLLRTLLTRVGLSVSALWAAD</sequence>
<comment type="function">
    <text evidence="1">Nucleoside triphosphate pyrophosphatase. May have a dual role in cell division arrest and in preventing the incorporation of modified nucleotides into cellular nucleic acids.</text>
</comment>
<comment type="catalytic activity">
    <reaction evidence="1">
        <text>a ribonucleoside 5'-triphosphate + H2O = a ribonucleoside 5'-phosphate + diphosphate + H(+)</text>
        <dbReference type="Rhea" id="RHEA:23996"/>
        <dbReference type="ChEBI" id="CHEBI:15377"/>
        <dbReference type="ChEBI" id="CHEBI:15378"/>
        <dbReference type="ChEBI" id="CHEBI:33019"/>
        <dbReference type="ChEBI" id="CHEBI:58043"/>
        <dbReference type="ChEBI" id="CHEBI:61557"/>
        <dbReference type="EC" id="3.6.1.9"/>
    </reaction>
</comment>
<comment type="catalytic activity">
    <reaction evidence="1">
        <text>a 2'-deoxyribonucleoside 5'-triphosphate + H2O = a 2'-deoxyribonucleoside 5'-phosphate + diphosphate + H(+)</text>
        <dbReference type="Rhea" id="RHEA:44644"/>
        <dbReference type="ChEBI" id="CHEBI:15377"/>
        <dbReference type="ChEBI" id="CHEBI:15378"/>
        <dbReference type="ChEBI" id="CHEBI:33019"/>
        <dbReference type="ChEBI" id="CHEBI:61560"/>
        <dbReference type="ChEBI" id="CHEBI:65317"/>
        <dbReference type="EC" id="3.6.1.9"/>
    </reaction>
</comment>
<comment type="cofactor">
    <cofactor evidence="1">
        <name>a divalent metal cation</name>
        <dbReference type="ChEBI" id="CHEBI:60240"/>
    </cofactor>
</comment>
<comment type="subcellular location">
    <subcellularLocation>
        <location evidence="1">Cytoplasm</location>
    </subcellularLocation>
</comment>
<comment type="similarity">
    <text evidence="1">Belongs to the Maf family.</text>
</comment>
<feature type="chain" id="PRO_0000267344" description="Nucleoside triphosphate pyrophosphatase">
    <location>
        <begin position="1"/>
        <end position="210"/>
    </location>
</feature>
<feature type="active site" description="Proton acceptor" evidence="1">
    <location>
        <position position="79"/>
    </location>
</feature>
<name>NTPP_MYCPA</name>
<accession>Q73UG7</accession>
<dbReference type="EC" id="3.6.1.9" evidence="1"/>
<dbReference type="EMBL" id="AE016958">
    <property type="protein sequence ID" value="AAS05951.1"/>
    <property type="molecule type" value="Genomic_DNA"/>
</dbReference>
<dbReference type="RefSeq" id="WP_003878965.1">
    <property type="nucleotide sequence ID" value="NZ_CP106873.1"/>
</dbReference>
<dbReference type="SMR" id="Q73UG7"/>
<dbReference type="STRING" id="262316.MAP_3401"/>
<dbReference type="KEGG" id="mpa:MAP_3401"/>
<dbReference type="PATRIC" id="fig|262316.17.peg.3615"/>
<dbReference type="eggNOG" id="COG0424">
    <property type="taxonomic scope" value="Bacteria"/>
</dbReference>
<dbReference type="HOGENOM" id="CLU_040416_1_2_11"/>
<dbReference type="Proteomes" id="UP000000580">
    <property type="component" value="Chromosome"/>
</dbReference>
<dbReference type="GO" id="GO:0005737">
    <property type="term" value="C:cytoplasm"/>
    <property type="evidence" value="ECO:0007669"/>
    <property type="project" value="UniProtKB-SubCell"/>
</dbReference>
<dbReference type="GO" id="GO:0047429">
    <property type="term" value="F:nucleoside triphosphate diphosphatase activity"/>
    <property type="evidence" value="ECO:0007669"/>
    <property type="project" value="UniProtKB-EC"/>
</dbReference>
<dbReference type="GO" id="GO:0009117">
    <property type="term" value="P:nucleotide metabolic process"/>
    <property type="evidence" value="ECO:0007669"/>
    <property type="project" value="UniProtKB-KW"/>
</dbReference>
<dbReference type="CDD" id="cd00555">
    <property type="entry name" value="Maf"/>
    <property type="match status" value="1"/>
</dbReference>
<dbReference type="Gene3D" id="3.90.950.10">
    <property type="match status" value="1"/>
</dbReference>
<dbReference type="HAMAP" id="MF_00528">
    <property type="entry name" value="Maf"/>
    <property type="match status" value="1"/>
</dbReference>
<dbReference type="InterPro" id="IPR029001">
    <property type="entry name" value="ITPase-like_fam"/>
</dbReference>
<dbReference type="InterPro" id="IPR003697">
    <property type="entry name" value="Maf-like"/>
</dbReference>
<dbReference type="NCBIfam" id="TIGR00172">
    <property type="entry name" value="maf"/>
    <property type="match status" value="1"/>
</dbReference>
<dbReference type="PANTHER" id="PTHR43213">
    <property type="entry name" value="BIFUNCTIONAL DTTP/UTP PYROPHOSPHATASE/METHYLTRANSFERASE PROTEIN-RELATED"/>
    <property type="match status" value="1"/>
</dbReference>
<dbReference type="PANTHER" id="PTHR43213:SF5">
    <property type="entry name" value="BIFUNCTIONAL DTTP_UTP PYROPHOSPHATASE_METHYLTRANSFERASE PROTEIN-RELATED"/>
    <property type="match status" value="1"/>
</dbReference>
<dbReference type="Pfam" id="PF02545">
    <property type="entry name" value="Maf"/>
    <property type="match status" value="1"/>
</dbReference>
<dbReference type="PIRSF" id="PIRSF006305">
    <property type="entry name" value="Maf"/>
    <property type="match status" value="1"/>
</dbReference>
<dbReference type="SUPFAM" id="SSF52972">
    <property type="entry name" value="ITPase-like"/>
    <property type="match status" value="1"/>
</dbReference>
<protein>
    <recommendedName>
        <fullName evidence="1">Nucleoside triphosphate pyrophosphatase</fullName>
        <ecNumber evidence="1">3.6.1.9</ecNumber>
    </recommendedName>
    <alternativeName>
        <fullName evidence="1">Nucleotide pyrophosphatase</fullName>
        <shortName evidence="1">Nucleotide PPase</shortName>
    </alternativeName>
</protein>